<comment type="function">
    <text evidence="1">Located on the platform of the 30S subunit.</text>
</comment>
<comment type="subunit">
    <text evidence="1">Part of the 30S ribosomal subunit.</text>
</comment>
<comment type="similarity">
    <text evidence="1">Belongs to the universal ribosomal protein uS11 family.</text>
</comment>
<keyword id="KW-1185">Reference proteome</keyword>
<keyword id="KW-0687">Ribonucleoprotein</keyword>
<keyword id="KW-0689">Ribosomal protein</keyword>
<keyword id="KW-0694">RNA-binding</keyword>
<keyword id="KW-0699">rRNA-binding</keyword>
<proteinExistence type="inferred from homology"/>
<evidence type="ECO:0000255" key="1">
    <source>
        <dbReference type="HAMAP-Rule" id="MF_01310"/>
    </source>
</evidence>
<evidence type="ECO:0000305" key="2"/>
<feature type="chain" id="PRO_0000294900" description="Small ribosomal subunit protein uS11">
    <location>
        <begin position="1"/>
        <end position="131"/>
    </location>
</feature>
<organism>
    <name type="scientific">Methanospirillum hungatei JF-1 (strain ATCC 27890 / DSM 864 / NBRC 100397 / JF-1)</name>
    <dbReference type="NCBI Taxonomy" id="323259"/>
    <lineage>
        <taxon>Archaea</taxon>
        <taxon>Methanobacteriati</taxon>
        <taxon>Methanobacteriota</taxon>
        <taxon>Stenosarchaea group</taxon>
        <taxon>Methanomicrobia</taxon>
        <taxon>Methanomicrobiales</taxon>
        <taxon>Methanospirillaceae</taxon>
        <taxon>Methanospirillum</taxon>
    </lineage>
</organism>
<protein>
    <recommendedName>
        <fullName evidence="1">Small ribosomal subunit protein uS11</fullName>
    </recommendedName>
    <alternativeName>
        <fullName evidence="2">30S ribosomal protein S11</fullName>
    </alternativeName>
</protein>
<gene>
    <name evidence="1" type="primary">rps11</name>
    <name type="ordered locus">Mhun_2900</name>
</gene>
<accession>Q2FT98</accession>
<name>RS11_METHJ</name>
<dbReference type="EMBL" id="CP000254">
    <property type="protein sequence ID" value="ABD42592.1"/>
    <property type="molecule type" value="Genomic_DNA"/>
</dbReference>
<dbReference type="SMR" id="Q2FT98"/>
<dbReference type="FunCoup" id="Q2FT98">
    <property type="interactions" value="160"/>
</dbReference>
<dbReference type="STRING" id="323259.Mhun_2900"/>
<dbReference type="EnsemblBacteria" id="ABD42592">
    <property type="protein sequence ID" value="ABD42592"/>
    <property type="gene ID" value="Mhun_2900"/>
</dbReference>
<dbReference type="KEGG" id="mhu:Mhun_2900"/>
<dbReference type="eggNOG" id="arCOG04240">
    <property type="taxonomic scope" value="Archaea"/>
</dbReference>
<dbReference type="HOGENOM" id="CLU_072439_6_1_2"/>
<dbReference type="InParanoid" id="Q2FT98"/>
<dbReference type="OrthoDB" id="12054at2157"/>
<dbReference type="Proteomes" id="UP000001941">
    <property type="component" value="Chromosome"/>
</dbReference>
<dbReference type="GO" id="GO:1990904">
    <property type="term" value="C:ribonucleoprotein complex"/>
    <property type="evidence" value="ECO:0007669"/>
    <property type="project" value="UniProtKB-KW"/>
</dbReference>
<dbReference type="GO" id="GO:0005840">
    <property type="term" value="C:ribosome"/>
    <property type="evidence" value="ECO:0007669"/>
    <property type="project" value="UniProtKB-KW"/>
</dbReference>
<dbReference type="GO" id="GO:0019843">
    <property type="term" value="F:rRNA binding"/>
    <property type="evidence" value="ECO:0007669"/>
    <property type="project" value="UniProtKB-UniRule"/>
</dbReference>
<dbReference type="GO" id="GO:0003735">
    <property type="term" value="F:structural constituent of ribosome"/>
    <property type="evidence" value="ECO:0007669"/>
    <property type="project" value="InterPro"/>
</dbReference>
<dbReference type="GO" id="GO:0006412">
    <property type="term" value="P:translation"/>
    <property type="evidence" value="ECO:0007669"/>
    <property type="project" value="UniProtKB-UniRule"/>
</dbReference>
<dbReference type="FunFam" id="3.30.420.80:FF:000007">
    <property type="entry name" value="30S ribosomal protein S11"/>
    <property type="match status" value="1"/>
</dbReference>
<dbReference type="Gene3D" id="3.30.420.80">
    <property type="entry name" value="Ribosomal protein S11"/>
    <property type="match status" value="1"/>
</dbReference>
<dbReference type="HAMAP" id="MF_01310">
    <property type="entry name" value="Ribosomal_uS11"/>
    <property type="match status" value="1"/>
</dbReference>
<dbReference type="InterPro" id="IPR001971">
    <property type="entry name" value="Ribosomal_uS11"/>
</dbReference>
<dbReference type="InterPro" id="IPR019961">
    <property type="entry name" value="Ribosomal_uS11_archaeal"/>
</dbReference>
<dbReference type="InterPro" id="IPR018102">
    <property type="entry name" value="Ribosomal_uS11_CS"/>
</dbReference>
<dbReference type="InterPro" id="IPR036967">
    <property type="entry name" value="Ribosomal_uS11_sf"/>
</dbReference>
<dbReference type="NCBIfam" id="TIGR03628">
    <property type="entry name" value="arch_S11P"/>
    <property type="match status" value="1"/>
</dbReference>
<dbReference type="NCBIfam" id="NF007176">
    <property type="entry name" value="PRK09607.1"/>
    <property type="match status" value="1"/>
</dbReference>
<dbReference type="PANTHER" id="PTHR11759">
    <property type="entry name" value="40S RIBOSOMAL PROTEIN S14/30S RIBOSOMAL PROTEIN S11"/>
    <property type="match status" value="1"/>
</dbReference>
<dbReference type="Pfam" id="PF00411">
    <property type="entry name" value="Ribosomal_S11"/>
    <property type="match status" value="1"/>
</dbReference>
<dbReference type="PIRSF" id="PIRSF002131">
    <property type="entry name" value="Ribosomal_S11"/>
    <property type="match status" value="1"/>
</dbReference>
<dbReference type="SUPFAM" id="SSF53137">
    <property type="entry name" value="Translational machinery components"/>
    <property type="match status" value="1"/>
</dbReference>
<dbReference type="PROSITE" id="PS00054">
    <property type="entry name" value="RIBOSOMAL_S11"/>
    <property type="match status" value="1"/>
</dbReference>
<sequence>MSEGKEKWGVAHIYASFNNTIITVTDLTGAETITKSSGGMVVKQDRNESSPYAAMQMAGNVAQAAREKGIVGLHVKVRAPGRGKQRSPGPGAQAAIRALARAGMRIGLIEDVTPVPHDSIRPKGGRRGRRV</sequence>
<reference key="1">
    <citation type="journal article" date="2016" name="Stand. Genomic Sci.">
        <title>Complete genome sequence of Methanospirillum hungatei type strain JF1.</title>
        <authorList>
            <person name="Gunsalus R.P."/>
            <person name="Cook L.E."/>
            <person name="Crable B."/>
            <person name="Rohlin L."/>
            <person name="McDonald E."/>
            <person name="Mouttaki H."/>
            <person name="Sieber J.R."/>
            <person name="Poweleit N."/>
            <person name="Zhou H."/>
            <person name="Lapidus A.L."/>
            <person name="Daligault H.E."/>
            <person name="Land M."/>
            <person name="Gilna P."/>
            <person name="Ivanova N."/>
            <person name="Kyrpides N."/>
            <person name="Culley D.E."/>
            <person name="McInerney M.J."/>
        </authorList>
    </citation>
    <scope>NUCLEOTIDE SEQUENCE [LARGE SCALE GENOMIC DNA]</scope>
    <source>
        <strain>ATCC 27890 / DSM 864 / NBRC 100397 / JF-1</strain>
    </source>
</reference>